<sequence length="246" mass="26506">MNPLITDFQTPQQRTPVIVALDFANEKDTLGFVRNLDPALCQIKIGKELFTATGRSLAESLIHQGFKLFLDLKYHDIPHTVAQACKVAADMGVWMVDMHASGGRRMMEAAAEAVAGYGTKPLLIGVTVLTSMEQSDLAEIGLNTAPEEQVIRLAKLAQSSGLDGVVCSAQEAAPLRRELGRDFVLVTPGIRLDVAGNNDDQRRIMTPAEALAAGSTYLVMGRPVTRAADPVAVLREVNRVANLEAN</sequence>
<proteinExistence type="inferred from homology"/>
<gene>
    <name evidence="1" type="primary">pyrF</name>
    <name type="ordered locus">NGO_0401</name>
</gene>
<name>PYRF_NEIG1</name>
<reference key="1">
    <citation type="submission" date="2003-03" db="EMBL/GenBank/DDBJ databases">
        <title>The complete genome sequence of Neisseria gonorrhoeae.</title>
        <authorList>
            <person name="Lewis L.A."/>
            <person name="Gillaspy A.F."/>
            <person name="McLaughlin R.E."/>
            <person name="Gipson M."/>
            <person name="Ducey T.F."/>
            <person name="Ownbey T."/>
            <person name="Hartman K."/>
            <person name="Nydick C."/>
            <person name="Carson M.B."/>
            <person name="Vaughn J."/>
            <person name="Thomson C."/>
            <person name="Song L."/>
            <person name="Lin S."/>
            <person name="Yuan X."/>
            <person name="Najar F."/>
            <person name="Zhan M."/>
            <person name="Ren Q."/>
            <person name="Zhu H."/>
            <person name="Qi S."/>
            <person name="Kenton S.M."/>
            <person name="Lai H."/>
            <person name="White J.D."/>
            <person name="Clifton S."/>
            <person name="Roe B.A."/>
            <person name="Dyer D.W."/>
        </authorList>
    </citation>
    <scope>NUCLEOTIDE SEQUENCE [LARGE SCALE GENOMIC DNA]</scope>
    <source>
        <strain>ATCC 700825 / FA 1090</strain>
    </source>
</reference>
<evidence type="ECO:0000255" key="1">
    <source>
        <dbReference type="HAMAP-Rule" id="MF_01200"/>
    </source>
</evidence>
<keyword id="KW-0210">Decarboxylase</keyword>
<keyword id="KW-0456">Lyase</keyword>
<keyword id="KW-0665">Pyrimidine biosynthesis</keyword>
<keyword id="KW-1185">Reference proteome</keyword>
<accession>Q5F9J2</accession>
<organism>
    <name type="scientific">Neisseria gonorrhoeae (strain ATCC 700825 / FA 1090)</name>
    <dbReference type="NCBI Taxonomy" id="242231"/>
    <lineage>
        <taxon>Bacteria</taxon>
        <taxon>Pseudomonadati</taxon>
        <taxon>Pseudomonadota</taxon>
        <taxon>Betaproteobacteria</taxon>
        <taxon>Neisseriales</taxon>
        <taxon>Neisseriaceae</taxon>
        <taxon>Neisseria</taxon>
    </lineage>
</organism>
<dbReference type="EC" id="4.1.1.23" evidence="1"/>
<dbReference type="EMBL" id="AE004969">
    <property type="protein sequence ID" value="AAW89145.1"/>
    <property type="molecule type" value="Genomic_DNA"/>
</dbReference>
<dbReference type="RefSeq" id="WP_003687835.1">
    <property type="nucleotide sequence ID" value="NC_002946.2"/>
</dbReference>
<dbReference type="RefSeq" id="YP_207557.1">
    <property type="nucleotide sequence ID" value="NC_002946.2"/>
</dbReference>
<dbReference type="SMR" id="Q5F9J2"/>
<dbReference type="STRING" id="242231.NGO_0401"/>
<dbReference type="GeneID" id="66752739"/>
<dbReference type="KEGG" id="ngo:NGO_0401"/>
<dbReference type="PATRIC" id="fig|242231.10.peg.483"/>
<dbReference type="HOGENOM" id="CLU_067069_0_0_4"/>
<dbReference type="UniPathway" id="UPA00070">
    <property type="reaction ID" value="UER00120"/>
</dbReference>
<dbReference type="Proteomes" id="UP000000535">
    <property type="component" value="Chromosome"/>
</dbReference>
<dbReference type="GO" id="GO:0005829">
    <property type="term" value="C:cytosol"/>
    <property type="evidence" value="ECO:0007669"/>
    <property type="project" value="TreeGrafter"/>
</dbReference>
<dbReference type="GO" id="GO:0004590">
    <property type="term" value="F:orotidine-5'-phosphate decarboxylase activity"/>
    <property type="evidence" value="ECO:0007669"/>
    <property type="project" value="UniProtKB-UniRule"/>
</dbReference>
<dbReference type="GO" id="GO:0006207">
    <property type="term" value="P:'de novo' pyrimidine nucleobase biosynthetic process"/>
    <property type="evidence" value="ECO:0007669"/>
    <property type="project" value="InterPro"/>
</dbReference>
<dbReference type="GO" id="GO:0044205">
    <property type="term" value="P:'de novo' UMP biosynthetic process"/>
    <property type="evidence" value="ECO:0007669"/>
    <property type="project" value="UniProtKB-UniRule"/>
</dbReference>
<dbReference type="CDD" id="cd04725">
    <property type="entry name" value="OMP_decarboxylase_like"/>
    <property type="match status" value="1"/>
</dbReference>
<dbReference type="FunFam" id="3.20.20.70:FF:000015">
    <property type="entry name" value="Orotidine 5'-phosphate decarboxylase"/>
    <property type="match status" value="1"/>
</dbReference>
<dbReference type="Gene3D" id="3.20.20.70">
    <property type="entry name" value="Aldolase class I"/>
    <property type="match status" value="1"/>
</dbReference>
<dbReference type="HAMAP" id="MF_01200_B">
    <property type="entry name" value="OMPdecase_type1_B"/>
    <property type="match status" value="1"/>
</dbReference>
<dbReference type="InterPro" id="IPR013785">
    <property type="entry name" value="Aldolase_TIM"/>
</dbReference>
<dbReference type="InterPro" id="IPR014732">
    <property type="entry name" value="OMPdecase"/>
</dbReference>
<dbReference type="InterPro" id="IPR018089">
    <property type="entry name" value="OMPdecase_AS"/>
</dbReference>
<dbReference type="InterPro" id="IPR047596">
    <property type="entry name" value="OMPdecase_bac"/>
</dbReference>
<dbReference type="InterPro" id="IPR001754">
    <property type="entry name" value="OMPdeCOase_dom"/>
</dbReference>
<dbReference type="InterPro" id="IPR011060">
    <property type="entry name" value="RibuloseP-bd_barrel"/>
</dbReference>
<dbReference type="NCBIfam" id="NF001273">
    <property type="entry name" value="PRK00230.1"/>
    <property type="match status" value="1"/>
</dbReference>
<dbReference type="NCBIfam" id="TIGR01740">
    <property type="entry name" value="pyrF"/>
    <property type="match status" value="1"/>
</dbReference>
<dbReference type="PANTHER" id="PTHR32119">
    <property type="entry name" value="OROTIDINE 5'-PHOSPHATE DECARBOXYLASE"/>
    <property type="match status" value="1"/>
</dbReference>
<dbReference type="PANTHER" id="PTHR32119:SF2">
    <property type="entry name" value="OROTIDINE 5'-PHOSPHATE DECARBOXYLASE"/>
    <property type="match status" value="1"/>
</dbReference>
<dbReference type="Pfam" id="PF00215">
    <property type="entry name" value="OMPdecase"/>
    <property type="match status" value="1"/>
</dbReference>
<dbReference type="SMART" id="SM00934">
    <property type="entry name" value="OMPdecase"/>
    <property type="match status" value="1"/>
</dbReference>
<dbReference type="SUPFAM" id="SSF51366">
    <property type="entry name" value="Ribulose-phoshate binding barrel"/>
    <property type="match status" value="1"/>
</dbReference>
<dbReference type="PROSITE" id="PS00156">
    <property type="entry name" value="OMPDECASE"/>
    <property type="match status" value="1"/>
</dbReference>
<feature type="chain" id="PRO_0000241878" description="Orotidine 5'-phosphate decarboxylase">
    <location>
        <begin position="1"/>
        <end position="246"/>
    </location>
</feature>
<feature type="active site" description="Proton donor" evidence="1">
    <location>
        <position position="73"/>
    </location>
</feature>
<feature type="binding site" evidence="1">
    <location>
        <position position="22"/>
    </location>
    <ligand>
        <name>substrate</name>
    </ligand>
</feature>
<feature type="binding site" evidence="1">
    <location>
        <position position="44"/>
    </location>
    <ligand>
        <name>substrate</name>
    </ligand>
</feature>
<feature type="binding site" evidence="1">
    <location>
        <begin position="71"/>
        <end position="80"/>
    </location>
    <ligand>
        <name>substrate</name>
    </ligand>
</feature>
<feature type="binding site" evidence="1">
    <location>
        <position position="130"/>
    </location>
    <ligand>
        <name>substrate</name>
    </ligand>
</feature>
<feature type="binding site" evidence="1">
    <location>
        <position position="191"/>
    </location>
    <ligand>
        <name>substrate</name>
    </ligand>
</feature>
<feature type="binding site" evidence="1">
    <location>
        <position position="201"/>
    </location>
    <ligand>
        <name>substrate</name>
    </ligand>
</feature>
<feature type="binding site" evidence="1">
    <location>
        <position position="221"/>
    </location>
    <ligand>
        <name>substrate</name>
    </ligand>
</feature>
<feature type="binding site" evidence="1">
    <location>
        <position position="222"/>
    </location>
    <ligand>
        <name>substrate</name>
    </ligand>
</feature>
<comment type="function">
    <text evidence="1">Catalyzes the decarboxylation of orotidine 5'-monophosphate (OMP) to uridine 5'-monophosphate (UMP).</text>
</comment>
<comment type="catalytic activity">
    <reaction evidence="1">
        <text>orotidine 5'-phosphate + H(+) = UMP + CO2</text>
        <dbReference type="Rhea" id="RHEA:11596"/>
        <dbReference type="ChEBI" id="CHEBI:15378"/>
        <dbReference type="ChEBI" id="CHEBI:16526"/>
        <dbReference type="ChEBI" id="CHEBI:57538"/>
        <dbReference type="ChEBI" id="CHEBI:57865"/>
        <dbReference type="EC" id="4.1.1.23"/>
    </reaction>
</comment>
<comment type="pathway">
    <text evidence="1">Pyrimidine metabolism; UMP biosynthesis via de novo pathway; UMP from orotate: step 2/2.</text>
</comment>
<comment type="subunit">
    <text evidence="1">Homodimer.</text>
</comment>
<comment type="similarity">
    <text evidence="1">Belongs to the OMP decarboxylase family. Type 1 subfamily.</text>
</comment>
<protein>
    <recommendedName>
        <fullName evidence="1">Orotidine 5'-phosphate decarboxylase</fullName>
        <ecNumber evidence="1">4.1.1.23</ecNumber>
    </recommendedName>
    <alternativeName>
        <fullName evidence="1">OMP decarboxylase</fullName>
        <shortName evidence="1">OMPDCase</shortName>
        <shortName evidence="1">OMPdecase</shortName>
    </alternativeName>
</protein>